<accession>A9A5I0</accession>
<sequence length="130" mass="14700">MPATNILANLFVTLYNNETRRKGECTILPTSKLGIEVLKTLQKDGYIGEFEHIDDKRGGKFKIKLLAKITKCGAISPRFKVKTDEFNNWEQQYLPAYDRGMLLVTTNQGVMSHHEATQKGIGGFLIGYVY</sequence>
<reference key="1">
    <citation type="journal article" date="2010" name="Proc. Natl. Acad. Sci. U.S.A.">
        <title>Nitrosopumilus maritimus genome reveals unique mechanisms for nitrification and autotrophy in globally distributed marine crenarchaea.</title>
        <authorList>
            <person name="Walker C.B."/>
            <person name="de la Torre J.R."/>
            <person name="Klotz M.G."/>
            <person name="Urakawa H."/>
            <person name="Pinel N."/>
            <person name="Arp D.J."/>
            <person name="Brochier-Armanet C."/>
            <person name="Chain P.S."/>
            <person name="Chan P.P."/>
            <person name="Gollabgir A."/>
            <person name="Hemp J."/>
            <person name="Hugler M."/>
            <person name="Karr E.A."/>
            <person name="Konneke M."/>
            <person name="Shin M."/>
            <person name="Lawton T.J."/>
            <person name="Lowe T."/>
            <person name="Martens-Habbena W."/>
            <person name="Sayavedra-Soto L.A."/>
            <person name="Lang D."/>
            <person name="Sievert S.M."/>
            <person name="Rosenzweig A.C."/>
            <person name="Manning G."/>
            <person name="Stahl D.A."/>
        </authorList>
    </citation>
    <scope>NUCLEOTIDE SEQUENCE [LARGE SCALE GENOMIC DNA]</scope>
    <source>
        <strain>SCM1</strain>
    </source>
</reference>
<feature type="chain" id="PRO_1000140585" description="Small ribosomal subunit protein uS8">
    <location>
        <begin position="1"/>
        <end position="130"/>
    </location>
</feature>
<proteinExistence type="inferred from homology"/>
<gene>
    <name evidence="1" type="primary">rps8</name>
    <name type="ordered locus">Nmar_0795</name>
</gene>
<organism>
    <name type="scientific">Nitrosopumilus maritimus (strain SCM1)</name>
    <dbReference type="NCBI Taxonomy" id="436308"/>
    <lineage>
        <taxon>Archaea</taxon>
        <taxon>Nitrososphaerota</taxon>
        <taxon>Nitrososphaeria</taxon>
        <taxon>Nitrosopumilales</taxon>
        <taxon>Nitrosopumilaceae</taxon>
        <taxon>Nitrosopumilus</taxon>
    </lineage>
</organism>
<evidence type="ECO:0000255" key="1">
    <source>
        <dbReference type="HAMAP-Rule" id="MF_01302"/>
    </source>
</evidence>
<evidence type="ECO:0000305" key="2"/>
<protein>
    <recommendedName>
        <fullName evidence="1">Small ribosomal subunit protein uS8</fullName>
    </recommendedName>
    <alternativeName>
        <fullName evidence="2">30S ribosomal protein S8</fullName>
    </alternativeName>
</protein>
<comment type="function">
    <text evidence="1">One of the primary rRNA binding proteins, it binds directly to 16S rRNA central domain where it helps coordinate assembly of the platform of the 30S subunit.</text>
</comment>
<comment type="subunit">
    <text evidence="1">Part of the 30S ribosomal subunit.</text>
</comment>
<comment type="similarity">
    <text evidence="1">Belongs to the universal ribosomal protein uS8 family.</text>
</comment>
<keyword id="KW-1185">Reference proteome</keyword>
<keyword id="KW-0687">Ribonucleoprotein</keyword>
<keyword id="KW-0689">Ribosomal protein</keyword>
<keyword id="KW-0694">RNA-binding</keyword>
<keyword id="KW-0699">rRNA-binding</keyword>
<dbReference type="EMBL" id="CP000866">
    <property type="protein sequence ID" value="ABX12691.1"/>
    <property type="molecule type" value="Genomic_DNA"/>
</dbReference>
<dbReference type="RefSeq" id="WP_012215178.1">
    <property type="nucleotide sequence ID" value="NC_010085.1"/>
</dbReference>
<dbReference type="SMR" id="A9A5I0"/>
<dbReference type="FunCoup" id="A9A5I0">
    <property type="interactions" value="173"/>
</dbReference>
<dbReference type="STRING" id="436308.Nmar_0795"/>
<dbReference type="EnsemblBacteria" id="ABX12691">
    <property type="protein sequence ID" value="ABX12691"/>
    <property type="gene ID" value="Nmar_0795"/>
</dbReference>
<dbReference type="GeneID" id="5773765"/>
<dbReference type="KEGG" id="nmr:Nmar_0795"/>
<dbReference type="eggNOG" id="arCOG04091">
    <property type="taxonomic scope" value="Archaea"/>
</dbReference>
<dbReference type="HOGENOM" id="CLU_098428_1_1_2"/>
<dbReference type="InParanoid" id="A9A5I0"/>
<dbReference type="OrthoDB" id="5670at2157"/>
<dbReference type="PhylomeDB" id="A9A5I0"/>
<dbReference type="Proteomes" id="UP000000792">
    <property type="component" value="Chromosome"/>
</dbReference>
<dbReference type="GO" id="GO:0022627">
    <property type="term" value="C:cytosolic small ribosomal subunit"/>
    <property type="evidence" value="ECO:0000318"/>
    <property type="project" value="GO_Central"/>
</dbReference>
<dbReference type="GO" id="GO:0019843">
    <property type="term" value="F:rRNA binding"/>
    <property type="evidence" value="ECO:0007669"/>
    <property type="project" value="UniProtKB-UniRule"/>
</dbReference>
<dbReference type="GO" id="GO:0003735">
    <property type="term" value="F:structural constituent of ribosome"/>
    <property type="evidence" value="ECO:0000318"/>
    <property type="project" value="GO_Central"/>
</dbReference>
<dbReference type="GO" id="GO:0006412">
    <property type="term" value="P:translation"/>
    <property type="evidence" value="ECO:0007669"/>
    <property type="project" value="UniProtKB-UniRule"/>
</dbReference>
<dbReference type="FunFam" id="3.30.1490.10:FF:000002">
    <property type="entry name" value="40S ribosomal protein S15a"/>
    <property type="match status" value="1"/>
</dbReference>
<dbReference type="Gene3D" id="3.30.1370.30">
    <property type="match status" value="1"/>
</dbReference>
<dbReference type="Gene3D" id="3.30.1490.10">
    <property type="match status" value="1"/>
</dbReference>
<dbReference type="HAMAP" id="MF_01302_A">
    <property type="entry name" value="Ribosomal_uS8_A"/>
    <property type="match status" value="1"/>
</dbReference>
<dbReference type="InterPro" id="IPR000630">
    <property type="entry name" value="Ribosomal_uS8"/>
</dbReference>
<dbReference type="InterPro" id="IPR035987">
    <property type="entry name" value="Ribosomal_uS8_sf"/>
</dbReference>
<dbReference type="NCBIfam" id="NF003115">
    <property type="entry name" value="PRK04034.1"/>
    <property type="match status" value="1"/>
</dbReference>
<dbReference type="PANTHER" id="PTHR11758">
    <property type="entry name" value="40S RIBOSOMAL PROTEIN S15A"/>
    <property type="match status" value="1"/>
</dbReference>
<dbReference type="Pfam" id="PF00410">
    <property type="entry name" value="Ribosomal_S8"/>
    <property type="match status" value="1"/>
</dbReference>
<dbReference type="SUPFAM" id="SSF56047">
    <property type="entry name" value="Ribosomal protein S8"/>
    <property type="match status" value="1"/>
</dbReference>
<name>RS8_NITMS</name>